<feature type="chain" id="PRO_0000110260" description="NAD-dependent protein deacetylase sirtuin-2">
    <location>
        <begin position="1"/>
        <end position="352"/>
    </location>
</feature>
<feature type="domain" description="Deacetylase sirtuin-type" evidence="5">
    <location>
        <begin position="20"/>
        <end position="301"/>
    </location>
</feature>
<feature type="region of interest" description="Disordered" evidence="6">
    <location>
        <begin position="314"/>
        <end position="352"/>
    </location>
</feature>
<feature type="compositionally biased region" description="Low complexity" evidence="6">
    <location>
        <begin position="324"/>
        <end position="333"/>
    </location>
</feature>
<feature type="compositionally biased region" description="Basic and acidic residues" evidence="6">
    <location>
        <begin position="339"/>
        <end position="352"/>
    </location>
</feature>
<feature type="active site" description="Proton acceptor" evidence="5">
    <location>
        <position position="150"/>
    </location>
</feature>
<feature type="binding site" evidence="2">
    <location>
        <begin position="48"/>
        <end position="52"/>
    </location>
    <ligand>
        <name>NAD(+)</name>
        <dbReference type="ChEBI" id="CHEBI:57540"/>
    </ligand>
</feature>
<feature type="binding site" evidence="2">
    <location>
        <begin position="58"/>
        <end position="60"/>
    </location>
    <ligand>
        <name>NAD(+)</name>
        <dbReference type="ChEBI" id="CHEBI:57540"/>
    </ligand>
</feature>
<feature type="binding site" evidence="2">
    <location>
        <begin position="130"/>
        <end position="133"/>
    </location>
    <ligand>
        <name>NAD(+)</name>
        <dbReference type="ChEBI" id="CHEBI:57540"/>
    </ligand>
</feature>
<feature type="binding site" evidence="5">
    <location>
        <position position="158"/>
    </location>
    <ligand>
        <name>Zn(2+)</name>
        <dbReference type="ChEBI" id="CHEBI:29105"/>
    </ligand>
</feature>
<feature type="binding site" evidence="5">
    <location>
        <position position="163"/>
    </location>
    <ligand>
        <name>Zn(2+)</name>
        <dbReference type="ChEBI" id="CHEBI:29105"/>
    </ligand>
</feature>
<feature type="binding site" evidence="5">
    <location>
        <position position="184"/>
    </location>
    <ligand>
        <name>Zn(2+)</name>
        <dbReference type="ChEBI" id="CHEBI:29105"/>
    </ligand>
</feature>
<feature type="binding site" evidence="5">
    <location>
        <position position="187"/>
    </location>
    <ligand>
        <name>Zn(2+)</name>
        <dbReference type="ChEBI" id="CHEBI:29105"/>
    </ligand>
</feature>
<feature type="binding site" evidence="2">
    <location>
        <begin position="225"/>
        <end position="226"/>
    </location>
    <ligand>
        <name>NAD(+)</name>
        <dbReference type="ChEBI" id="CHEBI:57540"/>
    </ligand>
</feature>
<feature type="binding site" evidence="2">
    <location>
        <begin position="249"/>
        <end position="251"/>
    </location>
    <ligand>
        <name>NAD(+)</name>
        <dbReference type="ChEBI" id="CHEBI:57540"/>
    </ligand>
</feature>
<feature type="binding site" evidence="2">
    <location>
        <position position="287"/>
    </location>
    <ligand>
        <name>NAD(+)</name>
        <dbReference type="ChEBI" id="CHEBI:57540"/>
    </ligand>
</feature>
<feature type="modified residue" description="Phosphoserine" evidence="1">
    <location>
        <position position="16"/>
    </location>
</feature>
<feature type="modified residue" description="Phosphoserine" evidence="1">
    <location>
        <position position="63"/>
    </location>
</feature>
<feature type="modified residue" description="Phosphoserine" evidence="1">
    <location>
        <position position="170"/>
    </location>
</feature>
<feature type="modified residue" description="Phosphoserine" evidence="2">
    <location>
        <position position="331"/>
    </location>
</feature>
<feature type="modified residue" description="Phosphoserine" evidence="2">
    <location>
        <position position="335"/>
    </location>
</feature>
<feature type="strand" evidence="8">
    <location>
        <begin position="23"/>
        <end position="26"/>
    </location>
</feature>
<feature type="helix" evidence="8">
    <location>
        <begin position="27"/>
        <end position="35"/>
    </location>
</feature>
<feature type="strand" evidence="8">
    <location>
        <begin position="42"/>
        <end position="46"/>
    </location>
</feature>
<feature type="helix" evidence="8">
    <location>
        <begin position="48"/>
        <end position="50"/>
    </location>
</feature>
<feature type="helix" evidence="8">
    <location>
        <begin position="52"/>
        <end position="54"/>
    </location>
</feature>
<feature type="helix" evidence="8">
    <location>
        <begin position="71"/>
        <end position="73"/>
    </location>
</feature>
<feature type="helix" evidence="8">
    <location>
        <begin position="78"/>
        <end position="82"/>
    </location>
</feature>
<feature type="helix" evidence="8">
    <location>
        <begin position="84"/>
        <end position="89"/>
    </location>
</feature>
<feature type="helix" evidence="8">
    <location>
        <begin position="92"/>
        <end position="101"/>
    </location>
</feature>
<feature type="helix" evidence="8">
    <location>
        <begin position="110"/>
        <end position="120"/>
    </location>
</feature>
<feature type="strand" evidence="8">
    <location>
        <begin position="124"/>
        <end position="129"/>
    </location>
</feature>
<feature type="helix" evidence="8">
    <location>
        <begin position="135"/>
        <end position="138"/>
    </location>
</feature>
<feature type="helix" evidence="8">
    <location>
        <begin position="143"/>
        <end position="145"/>
    </location>
</feature>
<feature type="strand" evidence="8">
    <location>
        <begin position="146"/>
        <end position="148"/>
    </location>
</feature>
<feature type="strand" evidence="8">
    <location>
        <begin position="151"/>
        <end position="159"/>
    </location>
</feature>
<feature type="turn" evidence="8">
    <location>
        <begin position="161"/>
        <end position="163"/>
    </location>
</feature>
<feature type="strand" evidence="8">
    <location>
        <begin position="166"/>
        <end position="168"/>
    </location>
</feature>
<feature type="helix" evidence="8">
    <location>
        <begin position="169"/>
        <end position="177"/>
    </location>
</feature>
<feature type="turn" evidence="8">
    <location>
        <begin position="185"/>
        <end position="187"/>
    </location>
</feature>
<feature type="strand" evidence="8">
    <location>
        <begin position="190"/>
        <end position="195"/>
    </location>
</feature>
<feature type="helix" evidence="8">
    <location>
        <begin position="204"/>
        <end position="216"/>
    </location>
</feature>
<feature type="strand" evidence="8">
    <location>
        <begin position="218"/>
        <end position="224"/>
    </location>
</feature>
<feature type="helix" evidence="8">
    <location>
        <begin position="232"/>
        <end position="235"/>
    </location>
</feature>
<feature type="strand" evidence="8">
    <location>
        <begin position="245"/>
        <end position="251"/>
    </location>
</feature>
<feature type="turn" evidence="8">
    <location>
        <begin position="253"/>
        <end position="259"/>
    </location>
</feature>
<feature type="strand" evidence="8">
    <location>
        <begin position="272"/>
        <end position="274"/>
    </location>
</feature>
<feature type="strand" evidence="8">
    <location>
        <begin position="279"/>
        <end position="285"/>
    </location>
</feature>
<feature type="helix" evidence="8">
    <location>
        <begin position="287"/>
        <end position="298"/>
    </location>
</feature>
<feature type="helix" evidence="8">
    <location>
        <begin position="301"/>
        <end position="317"/>
    </location>
</feature>
<proteinExistence type="evidence at protein level"/>
<keyword id="KW-0002">3D-structure</keyword>
<keyword id="KW-0131">Cell cycle</keyword>
<keyword id="KW-0132">Cell division</keyword>
<keyword id="KW-1003">Cell membrane</keyword>
<keyword id="KW-0966">Cell projection</keyword>
<keyword id="KW-0158">Chromosome</keyword>
<keyword id="KW-0963">Cytoplasm</keyword>
<keyword id="KW-0206">Cytoskeleton</keyword>
<keyword id="KW-0472">Membrane</keyword>
<keyword id="KW-0479">Metal-binding</keyword>
<keyword id="KW-0493">Microtubule</keyword>
<keyword id="KW-0498">Mitosis</keyword>
<keyword id="KW-0520">NAD</keyword>
<keyword id="KW-0539">Nucleus</keyword>
<keyword id="KW-0597">Phosphoprotein</keyword>
<keyword id="KW-1185">Reference proteome</keyword>
<keyword id="KW-0808">Transferase</keyword>
<keyword id="KW-0832">Ubl conjugation</keyword>
<keyword id="KW-0862">Zinc</keyword>
<dbReference type="EC" id="2.3.1.286" evidence="2 5"/>
<dbReference type="EC" id="2.3.1.-" evidence="2"/>
<dbReference type="EMBL" id="CR858698">
    <property type="protein sequence ID" value="CAH90909.1"/>
    <property type="molecule type" value="mRNA"/>
</dbReference>
<dbReference type="RefSeq" id="NP_001125519.1">
    <property type="nucleotide sequence ID" value="NM_001132047.1"/>
</dbReference>
<dbReference type="PDB" id="7T1D">
    <property type="method" value="X-ray"/>
    <property type="resolution" value="1.75 A"/>
    <property type="chains" value="A/B=19-319"/>
</dbReference>
<dbReference type="PDBsum" id="7T1D"/>
<dbReference type="SMR" id="Q5RBF1"/>
<dbReference type="STRING" id="9601.ENSPPYP00000023731"/>
<dbReference type="GeneID" id="100172430"/>
<dbReference type="KEGG" id="pon:100172430"/>
<dbReference type="CTD" id="22933"/>
<dbReference type="eggNOG" id="KOG2682">
    <property type="taxonomic scope" value="Eukaryota"/>
</dbReference>
<dbReference type="InParanoid" id="Q5RBF1"/>
<dbReference type="OrthoDB" id="420264at2759"/>
<dbReference type="Proteomes" id="UP000001595">
    <property type="component" value="Unplaced"/>
</dbReference>
<dbReference type="GO" id="GO:0005814">
    <property type="term" value="C:centriole"/>
    <property type="evidence" value="ECO:0000250"/>
    <property type="project" value="UniProtKB"/>
</dbReference>
<dbReference type="GO" id="GO:0005813">
    <property type="term" value="C:centrosome"/>
    <property type="evidence" value="ECO:0000250"/>
    <property type="project" value="UniProtKB"/>
</dbReference>
<dbReference type="GO" id="GO:0005694">
    <property type="term" value="C:chromosome"/>
    <property type="evidence" value="ECO:0000250"/>
    <property type="project" value="UniProtKB"/>
</dbReference>
<dbReference type="GO" id="GO:0005737">
    <property type="term" value="C:cytoplasm"/>
    <property type="evidence" value="ECO:0000250"/>
    <property type="project" value="UniProtKB"/>
</dbReference>
<dbReference type="GO" id="GO:0005829">
    <property type="term" value="C:cytosol"/>
    <property type="evidence" value="ECO:0000250"/>
    <property type="project" value="UniProtKB"/>
</dbReference>
<dbReference type="GO" id="GO:0097386">
    <property type="term" value="C:glial cell projection"/>
    <property type="evidence" value="ECO:0000250"/>
    <property type="project" value="UniProtKB"/>
</dbReference>
<dbReference type="GO" id="GO:0030426">
    <property type="term" value="C:growth cone"/>
    <property type="evidence" value="ECO:0007669"/>
    <property type="project" value="UniProtKB-SubCell"/>
</dbReference>
<dbReference type="GO" id="GO:0000792">
    <property type="term" value="C:heterochromatin"/>
    <property type="evidence" value="ECO:0000250"/>
    <property type="project" value="UniProtKB"/>
</dbReference>
<dbReference type="GO" id="GO:0044224">
    <property type="term" value="C:juxtaparanode region of axon"/>
    <property type="evidence" value="ECO:0000250"/>
    <property type="project" value="UniProtKB"/>
</dbReference>
<dbReference type="GO" id="GO:0043219">
    <property type="term" value="C:lateral loop"/>
    <property type="evidence" value="ECO:0000250"/>
    <property type="project" value="UniProtKB"/>
</dbReference>
<dbReference type="GO" id="GO:0072687">
    <property type="term" value="C:meiotic spindle"/>
    <property type="evidence" value="ECO:0000250"/>
    <property type="project" value="UniProtKB"/>
</dbReference>
<dbReference type="GO" id="GO:0005874">
    <property type="term" value="C:microtubule"/>
    <property type="evidence" value="ECO:0007669"/>
    <property type="project" value="UniProtKB-KW"/>
</dbReference>
<dbReference type="GO" id="GO:0030496">
    <property type="term" value="C:midbody"/>
    <property type="evidence" value="ECO:0000250"/>
    <property type="project" value="UniProtKB"/>
</dbReference>
<dbReference type="GO" id="GO:0072686">
    <property type="term" value="C:mitotic spindle"/>
    <property type="evidence" value="ECO:0000250"/>
    <property type="project" value="UniProtKB"/>
</dbReference>
<dbReference type="GO" id="GO:0043209">
    <property type="term" value="C:myelin sheath"/>
    <property type="evidence" value="ECO:0000250"/>
    <property type="project" value="UniProtKB"/>
</dbReference>
<dbReference type="GO" id="GO:0005634">
    <property type="term" value="C:nucleus"/>
    <property type="evidence" value="ECO:0000250"/>
    <property type="project" value="UniProtKB"/>
</dbReference>
<dbReference type="GO" id="GO:0033010">
    <property type="term" value="C:paranodal junction"/>
    <property type="evidence" value="ECO:0000250"/>
    <property type="project" value="UniProtKB"/>
</dbReference>
<dbReference type="GO" id="GO:0033270">
    <property type="term" value="C:paranode region of axon"/>
    <property type="evidence" value="ECO:0000250"/>
    <property type="project" value="UniProtKB"/>
</dbReference>
<dbReference type="GO" id="GO:0043204">
    <property type="term" value="C:perikaryon"/>
    <property type="evidence" value="ECO:0000250"/>
    <property type="project" value="UniProtKB"/>
</dbReference>
<dbReference type="GO" id="GO:0048471">
    <property type="term" value="C:perinuclear region of cytoplasm"/>
    <property type="evidence" value="ECO:0000250"/>
    <property type="project" value="UniProtKB"/>
</dbReference>
<dbReference type="GO" id="GO:0005886">
    <property type="term" value="C:plasma membrane"/>
    <property type="evidence" value="ECO:0007669"/>
    <property type="project" value="UniProtKB-KW"/>
</dbReference>
<dbReference type="GO" id="GO:0043220">
    <property type="term" value="C:Schmidt-Lanterman incisure"/>
    <property type="evidence" value="ECO:0000250"/>
    <property type="project" value="UniProtKB"/>
</dbReference>
<dbReference type="GO" id="GO:0005819">
    <property type="term" value="C:spindle"/>
    <property type="evidence" value="ECO:0000250"/>
    <property type="project" value="UniProtKB"/>
</dbReference>
<dbReference type="GO" id="GO:0003682">
    <property type="term" value="F:chromatin binding"/>
    <property type="evidence" value="ECO:0000250"/>
    <property type="project" value="UniProtKB"/>
</dbReference>
<dbReference type="GO" id="GO:0004407">
    <property type="term" value="F:histone deacetylase activity"/>
    <property type="evidence" value="ECO:0000250"/>
    <property type="project" value="UniProtKB"/>
</dbReference>
<dbReference type="GO" id="GO:0046970">
    <property type="term" value="F:histone H4K16 deacetylase activity, NAD-dependent"/>
    <property type="evidence" value="ECO:0000250"/>
    <property type="project" value="UniProtKB"/>
</dbReference>
<dbReference type="GO" id="GO:0046872">
    <property type="term" value="F:metal ion binding"/>
    <property type="evidence" value="ECO:0007669"/>
    <property type="project" value="UniProtKB-KW"/>
</dbReference>
<dbReference type="GO" id="GO:0070403">
    <property type="term" value="F:NAD+ binding"/>
    <property type="evidence" value="ECO:0007669"/>
    <property type="project" value="InterPro"/>
</dbReference>
<dbReference type="GO" id="GO:0140773">
    <property type="term" value="F:NAD-dependent protein demyristoylase activity"/>
    <property type="evidence" value="ECO:0000250"/>
    <property type="project" value="UniProtKB"/>
</dbReference>
<dbReference type="GO" id="GO:0140774">
    <property type="term" value="F:NAD-dependent protein depalmitoylase activity"/>
    <property type="evidence" value="ECO:0000250"/>
    <property type="project" value="UniProtKB"/>
</dbReference>
<dbReference type="GO" id="GO:0034979">
    <property type="term" value="F:NAD-dependent protein lysine deacetylase activity"/>
    <property type="evidence" value="ECO:0000250"/>
    <property type="project" value="UniProtKB"/>
</dbReference>
<dbReference type="GO" id="GO:0033558">
    <property type="term" value="F:protein lysine deacetylase activity"/>
    <property type="evidence" value="ECO:0000250"/>
    <property type="project" value="UniProtKB"/>
</dbReference>
<dbReference type="GO" id="GO:0042903">
    <property type="term" value="F:tubulin deacetylase activity"/>
    <property type="evidence" value="ECO:0000250"/>
    <property type="project" value="UniProtKB"/>
</dbReference>
<dbReference type="GO" id="GO:0051301">
    <property type="term" value="P:cell division"/>
    <property type="evidence" value="ECO:0007669"/>
    <property type="project" value="UniProtKB-KW"/>
</dbReference>
<dbReference type="GO" id="GO:0061433">
    <property type="term" value="P:cellular response to caloric restriction"/>
    <property type="evidence" value="ECO:0000250"/>
    <property type="project" value="UniProtKB"/>
</dbReference>
<dbReference type="GO" id="GO:0071872">
    <property type="term" value="P:cellular response to epinephrine stimulus"/>
    <property type="evidence" value="ECO:0000250"/>
    <property type="project" value="UniProtKB"/>
</dbReference>
<dbReference type="GO" id="GO:0071456">
    <property type="term" value="P:cellular response to hypoxia"/>
    <property type="evidence" value="ECO:0000250"/>
    <property type="project" value="UniProtKB"/>
</dbReference>
<dbReference type="GO" id="GO:0034599">
    <property type="term" value="P:cellular response to oxidative stress"/>
    <property type="evidence" value="ECO:0000250"/>
    <property type="project" value="UniProtKB"/>
</dbReference>
<dbReference type="GO" id="GO:0040029">
    <property type="term" value="P:epigenetic regulation of gene expression"/>
    <property type="evidence" value="ECO:0000250"/>
    <property type="project" value="UniProtKB"/>
</dbReference>
<dbReference type="GO" id="GO:0016042">
    <property type="term" value="P:lipid catabolic process"/>
    <property type="evidence" value="ECO:0000250"/>
    <property type="project" value="UniProtKB"/>
</dbReference>
<dbReference type="GO" id="GO:0022011">
    <property type="term" value="P:myelination in peripheral nervous system"/>
    <property type="evidence" value="ECO:0000250"/>
    <property type="project" value="UniProtKB"/>
</dbReference>
<dbReference type="GO" id="GO:0010507">
    <property type="term" value="P:negative regulation of autophagy"/>
    <property type="evidence" value="ECO:0000250"/>
    <property type="project" value="UniProtKB"/>
</dbReference>
<dbReference type="GO" id="GO:0045599">
    <property type="term" value="P:negative regulation of fat cell differentiation"/>
    <property type="evidence" value="ECO:0000250"/>
    <property type="project" value="UniProtKB"/>
</dbReference>
<dbReference type="GO" id="GO:0070446">
    <property type="term" value="P:negative regulation of oligodendrocyte progenitor proliferation"/>
    <property type="evidence" value="ECO:0000250"/>
    <property type="project" value="UniProtKB"/>
</dbReference>
<dbReference type="GO" id="GO:0010801">
    <property type="term" value="P:negative regulation of peptidyl-threonine phosphorylation"/>
    <property type="evidence" value="ECO:0000250"/>
    <property type="project" value="UniProtKB"/>
</dbReference>
<dbReference type="GO" id="GO:0042177">
    <property type="term" value="P:negative regulation of protein catabolic process"/>
    <property type="evidence" value="ECO:0000250"/>
    <property type="project" value="UniProtKB"/>
</dbReference>
<dbReference type="GO" id="GO:2000378">
    <property type="term" value="P:negative regulation of reactive oxygen species metabolic process"/>
    <property type="evidence" value="ECO:0000250"/>
    <property type="project" value="UniProtKB"/>
</dbReference>
<dbReference type="GO" id="GO:0000122">
    <property type="term" value="P:negative regulation of transcription by RNA polymerase II"/>
    <property type="evidence" value="ECO:0000250"/>
    <property type="project" value="UniProtKB"/>
</dbReference>
<dbReference type="GO" id="GO:0034983">
    <property type="term" value="P:peptidyl-lysine deacetylation"/>
    <property type="evidence" value="ECO:0000250"/>
    <property type="project" value="UniProtKB"/>
</dbReference>
<dbReference type="GO" id="GO:0051987">
    <property type="term" value="P:positive regulation of attachment of spindle microtubules to kinetochore"/>
    <property type="evidence" value="ECO:0000250"/>
    <property type="project" value="UniProtKB"/>
</dbReference>
<dbReference type="GO" id="GO:0051781">
    <property type="term" value="P:positive regulation of cell division"/>
    <property type="evidence" value="ECO:0000250"/>
    <property type="project" value="UniProtKB"/>
</dbReference>
<dbReference type="GO" id="GO:0043388">
    <property type="term" value="P:positive regulation of DNA binding"/>
    <property type="evidence" value="ECO:0000250"/>
    <property type="project" value="UniProtKB"/>
</dbReference>
<dbReference type="GO" id="GO:1900119">
    <property type="term" value="P:positive regulation of execution phase of apoptosis"/>
    <property type="evidence" value="ECO:0000250"/>
    <property type="project" value="UniProtKB"/>
</dbReference>
<dbReference type="GO" id="GO:0045836">
    <property type="term" value="P:positive regulation of meiotic nuclear division"/>
    <property type="evidence" value="ECO:0000250"/>
    <property type="project" value="UniProtKB"/>
</dbReference>
<dbReference type="GO" id="GO:1900195">
    <property type="term" value="P:positive regulation of oocyte maturation"/>
    <property type="evidence" value="ECO:0000250"/>
    <property type="project" value="UniProtKB"/>
</dbReference>
<dbReference type="GO" id="GO:0032436">
    <property type="term" value="P:positive regulation of proteasomal ubiquitin-dependent protein catabolic process"/>
    <property type="evidence" value="ECO:0000250"/>
    <property type="project" value="UniProtKB"/>
</dbReference>
<dbReference type="GO" id="GO:0045944">
    <property type="term" value="P:positive regulation of transcription by RNA polymerase II"/>
    <property type="evidence" value="ECO:0000250"/>
    <property type="project" value="UniProtKB"/>
</dbReference>
<dbReference type="GO" id="GO:0043161">
    <property type="term" value="P:proteasome-mediated ubiquitin-dependent protein catabolic process"/>
    <property type="evidence" value="ECO:0000250"/>
    <property type="project" value="UniProtKB"/>
</dbReference>
<dbReference type="GO" id="GO:0006476">
    <property type="term" value="P:protein deacetylation"/>
    <property type="evidence" value="ECO:0000250"/>
    <property type="project" value="UniProtKB"/>
</dbReference>
<dbReference type="GO" id="GO:0051726">
    <property type="term" value="P:regulation of cell cycle"/>
    <property type="evidence" value="ECO:0000250"/>
    <property type="project" value="UniProtKB"/>
</dbReference>
<dbReference type="GO" id="GO:0031641">
    <property type="term" value="P:regulation of myelination"/>
    <property type="evidence" value="ECO:0000250"/>
    <property type="project" value="UniProtKB"/>
</dbReference>
<dbReference type="GO" id="GO:0090042">
    <property type="term" value="P:tubulin deacetylation"/>
    <property type="evidence" value="ECO:0000250"/>
    <property type="project" value="UniProtKB"/>
</dbReference>
<dbReference type="CDD" id="cd01408">
    <property type="entry name" value="SIRT1"/>
    <property type="match status" value="1"/>
</dbReference>
<dbReference type="FunFam" id="3.40.50.1220:FF:000005">
    <property type="entry name" value="NAD-dependent deacetylase sirtuin-2"/>
    <property type="match status" value="1"/>
</dbReference>
<dbReference type="FunFam" id="3.30.1600.10:FF:000013">
    <property type="entry name" value="NAD-dependent protein deacetylase sirtuin-1"/>
    <property type="match status" value="1"/>
</dbReference>
<dbReference type="Gene3D" id="3.30.1600.10">
    <property type="entry name" value="SIR2/SIRT2 'Small Domain"/>
    <property type="match status" value="1"/>
</dbReference>
<dbReference type="Gene3D" id="3.40.50.1220">
    <property type="entry name" value="TPP-binding domain"/>
    <property type="match status" value="1"/>
</dbReference>
<dbReference type="InterPro" id="IPR029035">
    <property type="entry name" value="DHS-like_NAD/FAD-binding_dom"/>
</dbReference>
<dbReference type="InterPro" id="IPR050134">
    <property type="entry name" value="NAD-dep_sirtuin_deacylases"/>
</dbReference>
<dbReference type="InterPro" id="IPR003000">
    <property type="entry name" value="Sirtuin"/>
</dbReference>
<dbReference type="InterPro" id="IPR026591">
    <property type="entry name" value="Sirtuin_cat_small_dom_sf"/>
</dbReference>
<dbReference type="InterPro" id="IPR017328">
    <property type="entry name" value="Sirtuin_class_I"/>
</dbReference>
<dbReference type="InterPro" id="IPR026590">
    <property type="entry name" value="Ssirtuin_cat_dom"/>
</dbReference>
<dbReference type="PANTHER" id="PTHR11085:SF6">
    <property type="entry name" value="NAD-DEPENDENT PROTEIN DEACETYLASE SIRTUIN-2"/>
    <property type="match status" value="1"/>
</dbReference>
<dbReference type="PANTHER" id="PTHR11085">
    <property type="entry name" value="NAD-DEPENDENT PROTEIN DEACYLASE SIRTUIN-5, MITOCHONDRIAL-RELATED"/>
    <property type="match status" value="1"/>
</dbReference>
<dbReference type="Pfam" id="PF02146">
    <property type="entry name" value="SIR2"/>
    <property type="match status" value="1"/>
</dbReference>
<dbReference type="PIRSF" id="PIRSF037938">
    <property type="entry name" value="SIR2_euk"/>
    <property type="match status" value="1"/>
</dbReference>
<dbReference type="SUPFAM" id="SSF52467">
    <property type="entry name" value="DHS-like NAD/FAD-binding domain"/>
    <property type="match status" value="1"/>
</dbReference>
<dbReference type="PROSITE" id="PS50305">
    <property type="entry name" value="SIRTUIN"/>
    <property type="match status" value="1"/>
</dbReference>
<name>SIR2_PONAB</name>
<sequence length="352" mass="39515">MDFLRNLFSQTLSLGSQKERLLDELTLEGVARYMQSERCRRVICLVGAGISTSAGIPDFRSPSTGLYDNLEKYHLPYPEAIFEISYFKKHPEPFFALAKELYPGQFKPTICHYFMRLLKDKGLLLRCYTQNIDTLERIAGLEQEDLVEAHGTFYTSHCVSASCRHEYPLSWMKEKIFSEVTPKCEDCQSLVKPDIVFFGESLPARFFSCMQSDFLKVDLLLVMGTSLQVQPFASLISKAPLSTPRLLINKEKAGQSDPFLGMIMGLGGGMDFDSKKAYRDVAWLGECDQGCLALAELLGWKKELEDLVRREHASIDAQSGAGVPNPSTSASPKKSPPPAKDEARTTEREKPQ</sequence>
<evidence type="ECO:0000250" key="1">
    <source>
        <dbReference type="UniProtKB" id="Q5RJQ4"/>
    </source>
</evidence>
<evidence type="ECO:0000250" key="2">
    <source>
        <dbReference type="UniProtKB" id="Q8IXJ6"/>
    </source>
</evidence>
<evidence type="ECO:0000250" key="3">
    <source>
        <dbReference type="UniProtKB" id="Q8VDQ8"/>
    </source>
</evidence>
<evidence type="ECO:0000250" key="4">
    <source>
        <dbReference type="UniProtKB" id="Q96EB6"/>
    </source>
</evidence>
<evidence type="ECO:0000255" key="5">
    <source>
        <dbReference type="PROSITE-ProRule" id="PRU00236"/>
    </source>
</evidence>
<evidence type="ECO:0000256" key="6">
    <source>
        <dbReference type="SAM" id="MobiDB-lite"/>
    </source>
</evidence>
<evidence type="ECO:0000305" key="7"/>
<evidence type="ECO:0007829" key="8">
    <source>
        <dbReference type="PDB" id="7T1D"/>
    </source>
</evidence>
<accession>Q5RBF1</accession>
<gene>
    <name type="primary">SIRT2</name>
</gene>
<organism>
    <name type="scientific">Pongo abelii</name>
    <name type="common">Sumatran orangutan</name>
    <name type="synonym">Pongo pygmaeus abelii</name>
    <dbReference type="NCBI Taxonomy" id="9601"/>
    <lineage>
        <taxon>Eukaryota</taxon>
        <taxon>Metazoa</taxon>
        <taxon>Chordata</taxon>
        <taxon>Craniata</taxon>
        <taxon>Vertebrata</taxon>
        <taxon>Euteleostomi</taxon>
        <taxon>Mammalia</taxon>
        <taxon>Eutheria</taxon>
        <taxon>Euarchontoglires</taxon>
        <taxon>Primates</taxon>
        <taxon>Haplorrhini</taxon>
        <taxon>Catarrhini</taxon>
        <taxon>Hominidae</taxon>
        <taxon>Pongo</taxon>
    </lineage>
</organism>
<protein>
    <recommendedName>
        <fullName>NAD-dependent protein deacetylase sirtuin-2</fullName>
        <ecNumber evidence="2 5">2.3.1.286</ecNumber>
    </recommendedName>
    <alternativeName>
        <fullName evidence="7">NAD-dependent protein defatty-acylase sirtuin-2</fullName>
        <ecNumber evidence="2">2.3.1.-</ecNumber>
    </alternativeName>
    <alternativeName>
        <fullName>Regulatory protein SIR2 homolog 2</fullName>
    </alternativeName>
    <alternativeName>
        <fullName>SIR2-like protein 2</fullName>
    </alternativeName>
</protein>
<comment type="function">
    <text evidence="2 3">NAD-dependent protein deacetylase, which deacetylates internal lysines on histone and alpha-tubulin as well as many other proteins such as key transcription factors. Participates in the modulation of multiple and diverse biological processes such as cell cycle control, genomic integrity, microtubule dynamics, cell differentiation, metabolic networks, and autophagy. Plays a major role in the control of cell cycle progression and genomic stability. Functions in the antephase checkpoint preventing precocious mitotic entry in response to microtubule stress agents, and hence allowing proper inheritance of chromosomes. Positively regulates the anaphase promoting complex/cyclosome (APC/C) ubiquitin ligase complex activity by deacetylating CDC20 and FZR1, then allowing progression through mitosis. Associates both with chromatin at transcriptional start sites (TSSs) and enhancers of active genes. Plays a role in cell cycle and chromatin compaction through epigenetic modulation of the regulation of histone H4 'Lys-20' methylation (H4K20me1) during early mitosis. Specifically deacetylates histone H4 at 'Lys-16' (H4K16ac) between the G2/M transition and metaphase enabling H4K20me1 deposition by KMT5A leading to ulterior levels of H4K20me2 and H4K20me3 deposition throughout cell cycle, and mitotic S-phase progression. Deacetylates KMT5A modulating KMT5A chromatin localization during the mitotic stress response. Also deacetylates histone H3 at 'Lys-57' (H3K56ac) during the mitotic G2/M transition. During oocyte meiosis progression, may deacetylate histone H4 at 'Lys-16' (H4K16ac) and alpha-tubulin, regulating spindle assembly and chromosome alignment by influencing microtubule dynamics and kinetochore function. Deacetylates histone H4 at 'Lys-16' (H4K16ac) at the VEGFA promoter and thereby contributes to regulate expression of VEGFA, a key regulator of angiogenesis. Deacetylates alpha-tubulin at 'Lys-40' and hence controls neuronal motility, oligodendroglial cell arbor projection processes and proliferation of non-neuronal cells. Phosphorylation at Ser-368 by a G1/S-specific cyclin E-CDK2 complex inactivates SIRT2-mediated alpha-tubulin deacetylation, negatively regulating cell adhesion, cell migration and neurite outgrowth during neuronal differentiation. Deacetylates PARD3 and participates in the regulation of Schwann cell peripheral myelination formation during early postnatal development and during postinjury remyelination. Involved in several cellular metabolic pathways. Plays a role in the regulation of blood glucose homeostasis by deacetylating and stabilizing phosphoenolpyruvate carboxykinase PCK1 activity in response to low nutrient availability. Acts as a key regulator in the pentose phosphate pathway (PPP) by deacetylating and activating the glucose-6-phosphate G6PD enzyme, and therefore, stimulates the production of cytosolic NADPH to counteract oxidative damage. Maintains energy homeostasis in response to nutrient deprivation as well as energy expenditure by inhibiting adipogenesis and promoting lipolysis. Attenuates adipocyte differentiation by deacetylating and promoting FOXO1 interaction to PPARG and subsequent repression of PPARG-dependent transcriptional activity. Plays a role in the regulation of lysosome-mediated degradation of protein aggregates by autophagy in neuronal cells. Deacetylates FOXO1 in response to oxidative stress or serum deprivation, thereby negatively regulating FOXO1-mediated autophagy (By similarity). Deacetylates a broad range of transcription factors and co-regulators regulating target gene expression. Deacetylates transcriptional factor FOXO3 stimulating the ubiquitin ligase SCF(SKP2)-mediated FOXO3 ubiquitination and degradation (By similarity). Deacetylates HIF1A and therefore promotes HIF1A degradation and inhibition of HIF1A transcriptional activity in tumor cells in response to hypoxia. Deacetylates RELA in the cytoplasm inhibiting NF-kappaB-dependent transcription activation upon TNF-alpha stimulation. Inhibits transcriptional activation by deacetylating p53/TP53 and EP300. Also deacetylates EIF5A. Functions as a negative regulator on oxidative stress-tolerance in response to anoxia-reoxygenation conditions. Plays a role as tumor suppressor (By similarity). In addition to protein deacetylase activity, also has activity toward long-chain fatty acyl groups and mediates protein-lysine demyristoylation and depalmitoylation of target proteins, such as ARF6 and KRAS, thereby regulating their association with membranes (By similarity).</text>
</comment>
<comment type="catalytic activity">
    <reaction evidence="5">
        <text>N(6)-acetyl-L-lysyl-[protein] + NAD(+) + H2O = 2''-O-acetyl-ADP-D-ribose + nicotinamide + L-lysyl-[protein]</text>
        <dbReference type="Rhea" id="RHEA:43636"/>
        <dbReference type="Rhea" id="RHEA-COMP:9752"/>
        <dbReference type="Rhea" id="RHEA-COMP:10731"/>
        <dbReference type="ChEBI" id="CHEBI:15377"/>
        <dbReference type="ChEBI" id="CHEBI:17154"/>
        <dbReference type="ChEBI" id="CHEBI:29969"/>
        <dbReference type="ChEBI" id="CHEBI:57540"/>
        <dbReference type="ChEBI" id="CHEBI:61930"/>
        <dbReference type="ChEBI" id="CHEBI:83767"/>
        <dbReference type="EC" id="2.3.1.286"/>
    </reaction>
</comment>
<comment type="catalytic activity">
    <reaction evidence="2">
        <text>N(6)-tetradecanoyl-L-lysyl-[protein] + NAD(+) + H2O = 2''-O-tetradecanoyl-ADP-D-ribose + nicotinamide + L-lysyl-[protein]</text>
        <dbReference type="Rhea" id="RHEA:70567"/>
        <dbReference type="Rhea" id="RHEA-COMP:9752"/>
        <dbReference type="Rhea" id="RHEA-COMP:15437"/>
        <dbReference type="ChEBI" id="CHEBI:15377"/>
        <dbReference type="ChEBI" id="CHEBI:17154"/>
        <dbReference type="ChEBI" id="CHEBI:29969"/>
        <dbReference type="ChEBI" id="CHEBI:57540"/>
        <dbReference type="ChEBI" id="CHEBI:141129"/>
        <dbReference type="ChEBI" id="CHEBI:189674"/>
    </reaction>
    <physiologicalReaction direction="left-to-right" evidence="2">
        <dbReference type="Rhea" id="RHEA:70568"/>
    </physiologicalReaction>
</comment>
<comment type="catalytic activity">
    <reaction evidence="2">
        <text>N(6)-hexadecanoyl-L-lysyl-[protein] + NAD(+) + H2O = 2''-O-hexadecanoyl-ADP-D-ribose + nicotinamide + L-lysyl-[protein]</text>
        <dbReference type="Rhea" id="RHEA:70563"/>
        <dbReference type="Rhea" id="RHEA-COMP:9752"/>
        <dbReference type="Rhea" id="RHEA-COMP:14175"/>
        <dbReference type="ChEBI" id="CHEBI:15377"/>
        <dbReference type="ChEBI" id="CHEBI:17154"/>
        <dbReference type="ChEBI" id="CHEBI:29969"/>
        <dbReference type="ChEBI" id="CHEBI:57540"/>
        <dbReference type="ChEBI" id="CHEBI:138936"/>
        <dbReference type="ChEBI" id="CHEBI:189673"/>
    </reaction>
    <physiologicalReaction direction="left-to-right" evidence="2">
        <dbReference type="Rhea" id="RHEA:70564"/>
    </physiologicalReaction>
</comment>
<comment type="cofactor">
    <cofactor evidence="2">
        <name>Zn(2+)</name>
        <dbReference type="ChEBI" id="CHEBI:29105"/>
    </cofactor>
    <text evidence="2">Binds 1 zinc ion per subunit.</text>
</comment>
<comment type="activity regulation">
    <text evidence="2">Inhibited by Sirtinol, A3 and M15 small molecules. Inhibited by nicotinamide. Inhibited by a macrocyclic peptide inhibitor S2iL5. Inhibited by EP300-induced acetylation (By similarity).</text>
</comment>
<comment type="subunit">
    <text evidence="2 3 4">Interacts with CDC20, FOXO3 and FZR1 (By similarity). Associates with microtubules in primary cortical mature neurons (By similarity). Homotrimer. Interacts (via both phosphorylated, unphosphorylated, active or inactive forms) with HDAC6; the interaction is necessary for the complex to interact with alpha-tubulin, suggesting that these proteins belong to a large complex that deacetylates the cytoskeleton. Interacts with FOXO1; the interaction is disrupted upon serum-starvation or oxidative stress, leading to increased level of acetylated FOXO1 and induction of autophagy (By similarity). Interacts with RELA; the interaction occurs in the cytoplasm and is increased in a TNF-alpha-dependent manner. Interacts with HOXA10; the interaction is direct. Interacts with YWHAB and YWHAG; the interactions occur in a AKT-dependent manner and increase SIRT2-dependent TP53 deacetylation. Interacts with MAPK1/ERK2 and MAPK3/ERK1; the interactions increase SIRT2 stability and deacetylation activity. Interacts (phosphorylated form) with KMT5A isoform 2; the interaction is direct, stimulates KMT5A-mediated methyltransferase activity on histone at 'Lys-20' (H4K20me1) and is increased in a H(2)O(2)-induced oxidative stress-dependent manner. Interacts with G6PD; the interaction is enhanced by H(2)O(2) treatment. Interacts with a G1/S-specific cyclin E-CDK2 complex. Interacts with AURKA, CDK5R1 (p35 form) and CDK5 and HIF1A. Interacts with the tRNA ligase SARS1; recruited to the VEGFA promoter via interaction with SARS1 (By similarity). Interacts with BEX4; negatively regulates alpha-tubulin deacetylation by SIRT2 (By similarity). Interacts with MORN3; the interaction enhances the ubiquitination of p53/TP53 (By similarity).</text>
</comment>
<comment type="subcellular location">
    <subcellularLocation>
        <location evidence="2">Nucleus</location>
    </subcellularLocation>
    <subcellularLocation>
        <location evidence="3">Cytoplasm</location>
        <location evidence="3">Perinuclear region</location>
    </subcellularLocation>
    <subcellularLocation>
        <location evidence="2">Cytoplasm</location>
    </subcellularLocation>
    <subcellularLocation>
        <location evidence="2">Cytoplasm</location>
        <location evidence="2">Cytoskeleton</location>
    </subcellularLocation>
    <subcellularLocation>
        <location evidence="2">Cytoplasm</location>
        <location evidence="2">Cytoskeleton</location>
        <location evidence="2">Microtubule organizing center</location>
        <location evidence="2">Centrosome</location>
    </subcellularLocation>
    <subcellularLocation>
        <location evidence="2">Cytoplasm</location>
        <location evidence="2">Cytoskeleton</location>
        <location evidence="2">Microtubule organizing center</location>
        <location evidence="2">Centrosome</location>
        <location evidence="2">Centriole</location>
    </subcellularLocation>
    <subcellularLocation>
        <location evidence="2">Cytoplasm</location>
        <location evidence="2">Cytoskeleton</location>
        <location evidence="2">Spindle</location>
    </subcellularLocation>
    <subcellularLocation>
        <location evidence="2">Midbody</location>
    </subcellularLocation>
    <subcellularLocation>
        <location evidence="2">Chromosome</location>
    </subcellularLocation>
    <subcellularLocation>
        <location evidence="3">Perikaryon</location>
    </subcellularLocation>
    <subcellularLocation>
        <location evidence="3">Cell projection</location>
    </subcellularLocation>
    <subcellularLocation>
        <location evidence="3">Cell projection</location>
        <location evidence="3">Growth cone</location>
    </subcellularLocation>
    <subcellularLocation>
        <location evidence="3">Myelin membrane</location>
    </subcellularLocation>
    <text evidence="2 3">Localizes in the cytoplasm during most of the cell cycle except in the G2/M transition and during mitosis, where it is localized in association with chromatin and induces deacetylation of histone at 'Lys-16' (H4K16ac). Colocalizes with KMT5A at mitotic foci. Colocalizes with CDK1 at centrosome during prophase and splindle fibers during metaphase. Colocalizes with Aurora kinase AURKA at centrosome during early prophase and in the centrioles and growing mitotic spindle throughout metaphase. Colocalizes with Aurora kinase AURKB during cytokinesis with the midbody. Colocalizes with microtubules (By similarity). Detected in perinuclear foci that may be aggresomes containing misfolded, ubiquitinated proteins (By similarity). Shuttles between the cytoplasm and the nucleus through the CRM1 export pathway. Colocalizes with EP300 in the nucleus. Translocates to the nucleus and chromatin upon bacterium Listeria monocytogenes infection in interphase cells (By similarity). Deacetylates FOXO3 in the cytoplasm. Colocalizes with PLP1 in internodal regions, at paranodal axoglial junction and Schmidt-Lanterman incisures of myelin sheat. Colocalizes with CDK5R1 in the perikaryon, neurites and growth cone of hippocampal neurons. Colocalizes with alpha-tubulin in neuronal growth cone. Localizes in the cytoplasm and nucleus of germinal vesicle (GV) stage oocytes. Colocalizes with alpha-tubulin on the meiotic spindle as the oocytes enter into metaphase, and also during meiotic anaphase and telophase, especially with the midbody. Colocalizes with PARD3 in internodal region of axons (By similarity). Colocalizes with acetylated alpha-tubulin in cell projection processes during primary oligodendrocyte precursor (OLP) differentiation (By similarity).</text>
</comment>
<comment type="PTM">
    <text evidence="2">Phosphorylated at phosphoserine and phosphothreonine. Phosphorylated at Ser-331 by a mitotic kinase CDK1/cyclin B at the G2/M transition; phosphorylation regulates the delay in cell-cycle progression. Phosphorylated at Ser-331 by a mitotic kinase G1/S-specific cyclin E/Cdk2 complex; phosphorylation inactivates SIRT2-mediated alpha-tubulin deacetylation and thereby negatively regulates cell adhesion, cell migration and neurite outgrowth during neuronal differentiation. Phosphorylated by cyclin A/Cdk2 and p35-Cdk5 complexes and to a lesser extent by the cyclin D3/Cdk4 and cyclin B/Cdk1, in vitro. Dephosphorylated at Ser-331 by CDC14A and CDC14B around early anaphase (By similarity).</text>
</comment>
<comment type="PTM">
    <text evidence="2">Acetylated by EP300; acetylation leads both to the decreased of SIRT2-mediated alpha-tubulin deacetylase activity and SIRT2-mediated down-regulation of TP53 transcriptional activity.</text>
</comment>
<comment type="PTM">
    <text evidence="2">Ubiquitinated.</text>
</comment>
<comment type="similarity">
    <text evidence="7">Belongs to the sirtuin family. Class I subfamily.</text>
</comment>
<reference key="1">
    <citation type="submission" date="2004-11" db="EMBL/GenBank/DDBJ databases">
        <authorList>
            <consortium name="The German cDNA consortium"/>
        </authorList>
    </citation>
    <scope>NUCLEOTIDE SEQUENCE [LARGE SCALE MRNA]</scope>
    <source>
        <tissue>Heart</tissue>
    </source>
</reference>